<gene>
    <name evidence="1" type="primary">rnz</name>
    <name type="ordered locus">spr0591</name>
</gene>
<keyword id="KW-0255">Endonuclease</keyword>
<keyword id="KW-0378">Hydrolase</keyword>
<keyword id="KW-0479">Metal-binding</keyword>
<keyword id="KW-0540">Nuclease</keyword>
<keyword id="KW-1185">Reference proteome</keyword>
<keyword id="KW-0819">tRNA processing</keyword>
<keyword id="KW-0862">Zinc</keyword>
<name>RNZ_STRR6</name>
<proteinExistence type="inferred from homology"/>
<comment type="function">
    <text evidence="1">Zinc phosphodiesterase, which displays some tRNA 3'-processing endonuclease activity. Probably involved in tRNA maturation, by removing a 3'-trailer from precursor tRNA.</text>
</comment>
<comment type="catalytic activity">
    <reaction evidence="1">
        <text>Endonucleolytic cleavage of RNA, removing extra 3' nucleotides from tRNA precursor, generating 3' termini of tRNAs. A 3'-hydroxy group is left at the tRNA terminus and a 5'-phosphoryl group is left at the trailer molecule.</text>
        <dbReference type="EC" id="3.1.26.11"/>
    </reaction>
</comment>
<comment type="cofactor">
    <cofactor evidence="1">
        <name>Zn(2+)</name>
        <dbReference type="ChEBI" id="CHEBI:29105"/>
    </cofactor>
    <text evidence="1">Binds 2 Zn(2+) ions.</text>
</comment>
<comment type="subunit">
    <text evidence="1">Homodimer.</text>
</comment>
<comment type="similarity">
    <text evidence="1">Belongs to the RNase Z family.</text>
</comment>
<organism>
    <name type="scientific">Streptococcus pneumoniae (strain ATCC BAA-255 / R6)</name>
    <dbReference type="NCBI Taxonomy" id="171101"/>
    <lineage>
        <taxon>Bacteria</taxon>
        <taxon>Bacillati</taxon>
        <taxon>Bacillota</taxon>
        <taxon>Bacilli</taxon>
        <taxon>Lactobacillales</taxon>
        <taxon>Streptococcaceae</taxon>
        <taxon>Streptococcus</taxon>
    </lineage>
</organism>
<sequence length="309" mass="34140">MDIQFLGTGAGQPSKARNVSSLALKLLDEINEVWLFDCGEGTQNRILETTIRPRKVSKIFITHLHGDHIFGLPGFLSSRAFQANEEQTDLEIYGPQGIKSFVLTSLRVSGSRLPYRIHFHEFDQDSLGKILETDKFTVYAEELDHTIFCVGYRVMQKDLEGTLDAEKLKAAGVPFGPLFGKIKNGQDLVLEDGTEIKAADYISAPRPGKIITILGDTRKTGASVRLAVNADVLVHESTYGKGDEKIARNHGHSTNMQAAQVAVEAGAKRLLLNHISARFLSKDISKLKKDAATIFENVHVVKDLEEVEI</sequence>
<evidence type="ECO:0000255" key="1">
    <source>
        <dbReference type="HAMAP-Rule" id="MF_01818"/>
    </source>
</evidence>
<accession>Q8DQN1</accession>
<dbReference type="EC" id="3.1.26.11" evidence="1"/>
<dbReference type="EMBL" id="AE007317">
    <property type="protein sequence ID" value="AAK99395.1"/>
    <property type="molecule type" value="Genomic_DNA"/>
</dbReference>
<dbReference type="PIR" id="G97945">
    <property type="entry name" value="G97945"/>
</dbReference>
<dbReference type="RefSeq" id="NP_358185.1">
    <property type="nucleotide sequence ID" value="NC_003098.1"/>
</dbReference>
<dbReference type="RefSeq" id="WP_000354338.1">
    <property type="nucleotide sequence ID" value="NC_003098.1"/>
</dbReference>
<dbReference type="SMR" id="Q8DQN1"/>
<dbReference type="STRING" id="171101.spr0591"/>
<dbReference type="KEGG" id="spr:spr0591"/>
<dbReference type="PATRIC" id="fig|171101.6.peg.658"/>
<dbReference type="eggNOG" id="COG1234">
    <property type="taxonomic scope" value="Bacteria"/>
</dbReference>
<dbReference type="HOGENOM" id="CLU_031317_2_0_9"/>
<dbReference type="Proteomes" id="UP000000586">
    <property type="component" value="Chromosome"/>
</dbReference>
<dbReference type="GO" id="GO:0042781">
    <property type="term" value="F:3'-tRNA processing endoribonuclease activity"/>
    <property type="evidence" value="ECO:0000318"/>
    <property type="project" value="GO_Central"/>
</dbReference>
<dbReference type="GO" id="GO:0008270">
    <property type="term" value="F:zinc ion binding"/>
    <property type="evidence" value="ECO:0007669"/>
    <property type="project" value="UniProtKB-UniRule"/>
</dbReference>
<dbReference type="CDD" id="cd07717">
    <property type="entry name" value="RNaseZ_ZiPD-like_MBL-fold"/>
    <property type="match status" value="1"/>
</dbReference>
<dbReference type="FunFam" id="3.60.15.10:FF:000002">
    <property type="entry name" value="Ribonuclease Z"/>
    <property type="match status" value="1"/>
</dbReference>
<dbReference type="Gene3D" id="3.60.15.10">
    <property type="entry name" value="Ribonuclease Z/Hydroxyacylglutathione hydrolase-like"/>
    <property type="match status" value="1"/>
</dbReference>
<dbReference type="HAMAP" id="MF_01818">
    <property type="entry name" value="RNase_Z_BN"/>
    <property type="match status" value="1"/>
</dbReference>
<dbReference type="InterPro" id="IPR001279">
    <property type="entry name" value="Metallo-B-lactamas"/>
</dbReference>
<dbReference type="InterPro" id="IPR036866">
    <property type="entry name" value="RibonucZ/Hydroxyglut_hydro"/>
</dbReference>
<dbReference type="InterPro" id="IPR013471">
    <property type="entry name" value="RNase_Z/BN"/>
</dbReference>
<dbReference type="NCBIfam" id="NF000801">
    <property type="entry name" value="PRK00055.1-3"/>
    <property type="match status" value="1"/>
</dbReference>
<dbReference type="NCBIfam" id="TIGR02651">
    <property type="entry name" value="RNase_Z"/>
    <property type="match status" value="1"/>
</dbReference>
<dbReference type="PANTHER" id="PTHR46018">
    <property type="entry name" value="ZINC PHOSPHODIESTERASE ELAC PROTEIN 1"/>
    <property type="match status" value="1"/>
</dbReference>
<dbReference type="PANTHER" id="PTHR46018:SF2">
    <property type="entry name" value="ZINC PHOSPHODIESTERASE ELAC PROTEIN 1"/>
    <property type="match status" value="1"/>
</dbReference>
<dbReference type="Pfam" id="PF00753">
    <property type="entry name" value="Lactamase_B"/>
    <property type="match status" value="1"/>
</dbReference>
<dbReference type="SUPFAM" id="SSF56281">
    <property type="entry name" value="Metallo-hydrolase/oxidoreductase"/>
    <property type="match status" value="1"/>
</dbReference>
<feature type="chain" id="PRO_0000155907" description="Ribonuclease Z">
    <location>
        <begin position="1"/>
        <end position="309"/>
    </location>
</feature>
<feature type="active site" description="Proton acceptor" evidence="1">
    <location>
        <position position="67"/>
    </location>
</feature>
<feature type="binding site" evidence="1">
    <location>
        <position position="63"/>
    </location>
    <ligand>
        <name>Zn(2+)</name>
        <dbReference type="ChEBI" id="CHEBI:29105"/>
        <label>1</label>
        <note>catalytic</note>
    </ligand>
</feature>
<feature type="binding site" evidence="1">
    <location>
        <position position="65"/>
    </location>
    <ligand>
        <name>Zn(2+)</name>
        <dbReference type="ChEBI" id="CHEBI:29105"/>
        <label>1</label>
        <note>catalytic</note>
    </ligand>
</feature>
<feature type="binding site" evidence="1">
    <location>
        <position position="67"/>
    </location>
    <ligand>
        <name>Zn(2+)</name>
        <dbReference type="ChEBI" id="CHEBI:29105"/>
        <label>2</label>
        <note>catalytic</note>
    </ligand>
</feature>
<feature type="binding site" evidence="1">
    <location>
        <position position="68"/>
    </location>
    <ligand>
        <name>Zn(2+)</name>
        <dbReference type="ChEBI" id="CHEBI:29105"/>
        <label>2</label>
        <note>catalytic</note>
    </ligand>
</feature>
<feature type="binding site" evidence="1">
    <location>
        <position position="145"/>
    </location>
    <ligand>
        <name>Zn(2+)</name>
        <dbReference type="ChEBI" id="CHEBI:29105"/>
        <label>1</label>
        <note>catalytic</note>
    </ligand>
</feature>
<feature type="binding site" evidence="1">
    <location>
        <position position="216"/>
    </location>
    <ligand>
        <name>Zn(2+)</name>
        <dbReference type="ChEBI" id="CHEBI:29105"/>
        <label>1</label>
        <note>catalytic</note>
    </ligand>
</feature>
<feature type="binding site" evidence="1">
    <location>
        <position position="216"/>
    </location>
    <ligand>
        <name>Zn(2+)</name>
        <dbReference type="ChEBI" id="CHEBI:29105"/>
        <label>2</label>
        <note>catalytic</note>
    </ligand>
</feature>
<feature type="binding site" evidence="1">
    <location>
        <position position="274"/>
    </location>
    <ligand>
        <name>Zn(2+)</name>
        <dbReference type="ChEBI" id="CHEBI:29105"/>
        <label>2</label>
        <note>catalytic</note>
    </ligand>
</feature>
<reference key="1">
    <citation type="journal article" date="2001" name="J. Bacteriol.">
        <title>Genome of the bacterium Streptococcus pneumoniae strain R6.</title>
        <authorList>
            <person name="Hoskins J."/>
            <person name="Alborn W.E. Jr."/>
            <person name="Arnold J."/>
            <person name="Blaszczak L.C."/>
            <person name="Burgett S."/>
            <person name="DeHoff B.S."/>
            <person name="Estrem S.T."/>
            <person name="Fritz L."/>
            <person name="Fu D.-J."/>
            <person name="Fuller W."/>
            <person name="Geringer C."/>
            <person name="Gilmour R."/>
            <person name="Glass J.S."/>
            <person name="Khoja H."/>
            <person name="Kraft A.R."/>
            <person name="Lagace R.E."/>
            <person name="LeBlanc D.J."/>
            <person name="Lee L.N."/>
            <person name="Lefkowitz E.J."/>
            <person name="Lu J."/>
            <person name="Matsushima P."/>
            <person name="McAhren S.M."/>
            <person name="McHenney M."/>
            <person name="McLeaster K."/>
            <person name="Mundy C.W."/>
            <person name="Nicas T.I."/>
            <person name="Norris F.H."/>
            <person name="O'Gara M."/>
            <person name="Peery R.B."/>
            <person name="Robertson G.T."/>
            <person name="Rockey P."/>
            <person name="Sun P.-M."/>
            <person name="Winkler M.E."/>
            <person name="Yang Y."/>
            <person name="Young-Bellido M."/>
            <person name="Zhao G."/>
            <person name="Zook C.A."/>
            <person name="Baltz R.H."/>
            <person name="Jaskunas S.R."/>
            <person name="Rosteck P.R. Jr."/>
            <person name="Skatrud P.L."/>
            <person name="Glass J.I."/>
        </authorList>
    </citation>
    <scope>NUCLEOTIDE SEQUENCE [LARGE SCALE GENOMIC DNA]</scope>
    <source>
        <strain>ATCC BAA-255 / R6</strain>
    </source>
</reference>
<protein>
    <recommendedName>
        <fullName evidence="1">Ribonuclease Z</fullName>
        <shortName evidence="1">RNase Z</shortName>
        <ecNumber evidence="1">3.1.26.11</ecNumber>
    </recommendedName>
    <alternativeName>
        <fullName evidence="1">tRNA 3 endonuclease</fullName>
    </alternativeName>
    <alternativeName>
        <fullName evidence="1">tRNase Z</fullName>
    </alternativeName>
</protein>